<dbReference type="EMBL" id="L04475">
    <property type="protein sequence ID" value="AAC36842.1"/>
    <property type="molecule type" value="Unassigned_DNA"/>
</dbReference>
<dbReference type="PIR" id="S28671">
    <property type="entry name" value="S28671"/>
</dbReference>
<dbReference type="SMR" id="P35112"/>
<dbReference type="GO" id="GO:0003700">
    <property type="term" value="F:DNA-binding transcription factor activity"/>
    <property type="evidence" value="ECO:0007669"/>
    <property type="project" value="InterPro"/>
</dbReference>
<dbReference type="GO" id="GO:0043565">
    <property type="term" value="F:sequence-specific DNA binding"/>
    <property type="evidence" value="ECO:0007669"/>
    <property type="project" value="TreeGrafter"/>
</dbReference>
<dbReference type="GO" id="GO:0010628">
    <property type="term" value="P:positive regulation of gene expression"/>
    <property type="evidence" value="ECO:0007669"/>
    <property type="project" value="TreeGrafter"/>
</dbReference>
<dbReference type="CDD" id="cd08415">
    <property type="entry name" value="PBP2_LysR_opines_like"/>
    <property type="match status" value="1"/>
</dbReference>
<dbReference type="Gene3D" id="3.40.190.10">
    <property type="entry name" value="Periplasmic binding protein-like II"/>
    <property type="match status" value="2"/>
</dbReference>
<dbReference type="Gene3D" id="1.10.10.10">
    <property type="entry name" value="Winged helix-like DNA-binding domain superfamily/Winged helix DNA-binding domain"/>
    <property type="match status" value="1"/>
</dbReference>
<dbReference type="InterPro" id="IPR005119">
    <property type="entry name" value="LysR_subst-bd"/>
</dbReference>
<dbReference type="InterPro" id="IPR037424">
    <property type="entry name" value="NocR_PBP2"/>
</dbReference>
<dbReference type="InterPro" id="IPR000847">
    <property type="entry name" value="Tscrpt_reg_HTH_LysR"/>
</dbReference>
<dbReference type="InterPro" id="IPR036388">
    <property type="entry name" value="WH-like_DNA-bd_sf"/>
</dbReference>
<dbReference type="InterPro" id="IPR036390">
    <property type="entry name" value="WH_DNA-bd_sf"/>
</dbReference>
<dbReference type="PANTHER" id="PTHR30427">
    <property type="entry name" value="TRANSCRIPTIONAL ACTIVATOR PROTEIN LYSR"/>
    <property type="match status" value="1"/>
</dbReference>
<dbReference type="PANTHER" id="PTHR30427:SF1">
    <property type="entry name" value="TRANSCRIPTIONAL ACTIVATOR PROTEIN LYSR"/>
    <property type="match status" value="1"/>
</dbReference>
<dbReference type="Pfam" id="PF00126">
    <property type="entry name" value="HTH_1"/>
    <property type="match status" value="1"/>
</dbReference>
<dbReference type="Pfam" id="PF03466">
    <property type="entry name" value="LysR_substrate"/>
    <property type="match status" value="1"/>
</dbReference>
<dbReference type="PRINTS" id="PR00039">
    <property type="entry name" value="HTHLYSR"/>
</dbReference>
<dbReference type="SUPFAM" id="SSF53850">
    <property type="entry name" value="Periplasmic binding protein-like II"/>
    <property type="match status" value="1"/>
</dbReference>
<dbReference type="SUPFAM" id="SSF46785">
    <property type="entry name" value="Winged helix' DNA-binding domain"/>
    <property type="match status" value="1"/>
</dbReference>
<dbReference type="PROSITE" id="PS50931">
    <property type="entry name" value="HTH_LYSR"/>
    <property type="match status" value="1"/>
</dbReference>
<name>NOCR_AGRT7</name>
<evidence type="ECO:0000255" key="1">
    <source>
        <dbReference type="PROSITE-ProRule" id="PRU00253"/>
    </source>
</evidence>
<evidence type="ECO:0000305" key="2"/>
<sequence>MIQSRQLEAFRPVMLTGGMTSAANLVRITQPAISRLIRDLEEEIGISLFERTGNRLRPTREAGILFKEVSRHFNGIQHIDKVAAELKKSHMGSLRVACYTAPALSFMSGVIQTFIADRPDVSVYLDTVPSQTVLELVSLQHYDLGISILAGDYPGLTTEPVPSFRAVCLLPPGHRLEDKETVHATDLEGESLICLSPVSLLRMQTDAALDSCGVHCNRRIESSLALNLCDLVSRGMGVGIVDPFTADYYSANPVIQRSFDPVVPYHFAIVLPTDSPPPRLVSEFRAALLDALKALPYETI</sequence>
<proteinExistence type="inferred from homology"/>
<reference key="1">
    <citation type="journal article" date="1993" name="Mol. Gen. Genet.">
        <title>Nopaline causes a conformational change in the NocR regulatory protein-nocR promoter complex of Agrobacterium tumefaciens Ti plasmid pTiT37.</title>
        <authorList>
            <person name="Marincs F."/>
            <person name="White D.W."/>
        </authorList>
    </citation>
    <scope>NUCLEOTIDE SEQUENCE [GENOMIC DNA]</scope>
</reference>
<accession>P35112</accession>
<geneLocation type="plasmid">
    <name>pTiT37</name>
</geneLocation>
<protein>
    <recommendedName>
        <fullName>Regulatory protein NocR</fullName>
    </recommendedName>
</protein>
<feature type="chain" id="PRO_0000105695" description="Regulatory protein NocR">
    <location>
        <begin position="1"/>
        <end position="300"/>
    </location>
</feature>
<feature type="domain" description="HTH lysR-type" evidence="1">
    <location>
        <begin position="1"/>
        <end position="59"/>
    </location>
</feature>
<feature type="DNA-binding region" description="H-T-H motif" evidence="1">
    <location>
        <begin position="19"/>
        <end position="38"/>
    </location>
</feature>
<organism>
    <name type="scientific">Agrobacterium tumefaciens (strain T37)</name>
    <dbReference type="NCBI Taxonomy" id="176300"/>
    <lineage>
        <taxon>Bacteria</taxon>
        <taxon>Pseudomonadati</taxon>
        <taxon>Pseudomonadota</taxon>
        <taxon>Alphaproteobacteria</taxon>
        <taxon>Hyphomicrobiales</taxon>
        <taxon>Rhizobiaceae</taxon>
        <taxon>Rhizobium/Agrobacterium group</taxon>
        <taxon>Agrobacterium</taxon>
        <taxon>Agrobacterium tumefaciens complex</taxon>
    </lineage>
</organism>
<gene>
    <name type="primary">nocR</name>
</gene>
<comment type="function">
    <text>Positive regulatory protein for the noc operon involved in nopaline catabolism and uptake.</text>
</comment>
<comment type="similarity">
    <text evidence="2">Belongs to the LysR transcriptional regulatory family.</text>
</comment>
<keyword id="KW-0010">Activator</keyword>
<keyword id="KW-0238">DNA-binding</keyword>
<keyword id="KW-0614">Plasmid</keyword>
<keyword id="KW-0804">Transcription</keyword>
<keyword id="KW-0805">Transcription regulation</keyword>